<accession>Q5NE79</accession>
<evidence type="ECO:0000255" key="1">
    <source>
        <dbReference type="HAMAP-Rule" id="MF_00133"/>
    </source>
</evidence>
<evidence type="ECO:0007829" key="2">
    <source>
        <dbReference type="PDB" id="5KZM"/>
    </source>
</evidence>
<feature type="chain" id="PRO_1000018345" description="Tryptophan synthase beta chain">
    <location>
        <begin position="1"/>
        <end position="396"/>
    </location>
</feature>
<feature type="modified residue" description="N6-(pyridoxal phosphate)lysine" evidence="1">
    <location>
        <position position="86"/>
    </location>
</feature>
<feature type="strand" evidence="2">
    <location>
        <begin position="7"/>
        <end position="10"/>
    </location>
</feature>
<feature type="helix" evidence="2">
    <location>
        <begin position="18"/>
        <end position="20"/>
    </location>
</feature>
<feature type="helix" evidence="2">
    <location>
        <begin position="21"/>
        <end position="36"/>
    </location>
</feature>
<feature type="helix" evidence="2">
    <location>
        <begin position="38"/>
        <end position="50"/>
    </location>
</feature>
<feature type="strand" evidence="2">
    <location>
        <begin position="58"/>
        <end position="60"/>
    </location>
</feature>
<feature type="turn" evidence="2">
    <location>
        <begin position="64"/>
        <end position="67"/>
    </location>
</feature>
<feature type="strand" evidence="2">
    <location>
        <begin position="68"/>
        <end position="76"/>
    </location>
</feature>
<feature type="helix" evidence="2">
    <location>
        <begin position="77"/>
        <end position="79"/>
    </location>
</feature>
<feature type="helix" evidence="2">
    <location>
        <begin position="88"/>
        <end position="98"/>
    </location>
</feature>
<feature type="turn" evidence="2">
    <location>
        <begin position="99"/>
        <end position="101"/>
    </location>
</feature>
<feature type="strand" evidence="2">
    <location>
        <begin position="104"/>
        <end position="108"/>
    </location>
</feature>
<feature type="strand" evidence="2">
    <location>
        <begin position="110"/>
        <end position="112"/>
    </location>
</feature>
<feature type="helix" evidence="2">
    <location>
        <begin position="113"/>
        <end position="124"/>
    </location>
</feature>
<feature type="strand" evidence="2">
    <location>
        <begin position="128"/>
        <end position="134"/>
    </location>
</feature>
<feature type="helix" evidence="2">
    <location>
        <begin position="135"/>
        <end position="140"/>
    </location>
</feature>
<feature type="helix" evidence="2">
    <location>
        <begin position="142"/>
        <end position="150"/>
    </location>
</feature>
<feature type="strand" evidence="2">
    <location>
        <begin position="154"/>
        <end position="158"/>
    </location>
</feature>
<feature type="helix" evidence="2">
    <location>
        <begin position="165"/>
        <end position="179"/>
    </location>
</feature>
<feature type="turn" evidence="2">
    <location>
        <begin position="180"/>
        <end position="182"/>
    </location>
</feature>
<feature type="strand" evidence="2">
    <location>
        <begin position="183"/>
        <end position="185"/>
    </location>
</feature>
<feature type="strand" evidence="2">
    <location>
        <begin position="188"/>
        <end position="190"/>
    </location>
</feature>
<feature type="helix" evidence="2">
    <location>
        <begin position="196"/>
        <end position="204"/>
    </location>
</feature>
<feature type="helix" evidence="2">
    <location>
        <begin position="206"/>
        <end position="218"/>
    </location>
</feature>
<feature type="strand" evidence="2">
    <location>
        <begin position="224"/>
        <end position="229"/>
    </location>
</feature>
<feature type="strand" evidence="2">
    <location>
        <begin position="231"/>
        <end position="233"/>
    </location>
</feature>
<feature type="helix" evidence="2">
    <location>
        <begin position="234"/>
        <end position="240"/>
    </location>
</feature>
<feature type="helix" evidence="2">
    <location>
        <begin position="241"/>
        <end position="243"/>
    </location>
</feature>
<feature type="strand" evidence="2">
    <location>
        <begin position="249"/>
        <end position="258"/>
    </location>
</feature>
<feature type="helix" evidence="2">
    <location>
        <begin position="261"/>
        <end position="263"/>
    </location>
</feature>
<feature type="turn" evidence="2">
    <location>
        <begin position="270"/>
        <end position="272"/>
    </location>
</feature>
<feature type="strand" evidence="2">
    <location>
        <begin position="274"/>
        <end position="278"/>
    </location>
</feature>
<feature type="strand" evidence="2">
    <location>
        <begin position="281"/>
        <end position="285"/>
    </location>
</feature>
<feature type="helix" evidence="2">
    <location>
        <begin position="301"/>
        <end position="303"/>
    </location>
</feature>
<feature type="helix" evidence="2">
    <location>
        <begin position="310"/>
        <end position="317"/>
    </location>
</feature>
<feature type="strand" evidence="2">
    <location>
        <begin position="320"/>
        <end position="327"/>
    </location>
</feature>
<feature type="helix" evidence="2">
    <location>
        <begin position="328"/>
        <end position="340"/>
    </location>
</feature>
<feature type="helix" evidence="2">
    <location>
        <begin position="348"/>
        <end position="363"/>
    </location>
</feature>
<feature type="strand" evidence="2">
    <location>
        <begin position="369"/>
        <end position="375"/>
    </location>
</feature>
<feature type="strand" evidence="2">
    <location>
        <begin position="377"/>
        <end position="379"/>
    </location>
</feature>
<feature type="helix" evidence="2">
    <location>
        <begin position="380"/>
        <end position="382"/>
    </location>
</feature>
<feature type="helix" evidence="2">
    <location>
        <begin position="383"/>
        <end position="393"/>
    </location>
</feature>
<organism>
    <name type="scientific">Francisella tularensis subsp. tularensis (strain SCHU S4 / Schu 4)</name>
    <dbReference type="NCBI Taxonomy" id="177416"/>
    <lineage>
        <taxon>Bacteria</taxon>
        <taxon>Pseudomonadati</taxon>
        <taxon>Pseudomonadota</taxon>
        <taxon>Gammaproteobacteria</taxon>
        <taxon>Thiotrichales</taxon>
        <taxon>Francisellaceae</taxon>
        <taxon>Francisella</taxon>
    </lineage>
</organism>
<dbReference type="EC" id="4.2.1.20" evidence="1"/>
<dbReference type="EMBL" id="AJ749949">
    <property type="protein sequence ID" value="CAG46406.1"/>
    <property type="molecule type" value="Genomic_DNA"/>
</dbReference>
<dbReference type="RefSeq" id="WP_003022755.1">
    <property type="nucleotide sequence ID" value="NC_006570.2"/>
</dbReference>
<dbReference type="RefSeq" id="YP_170663.1">
    <property type="nucleotide sequence ID" value="NC_006570.2"/>
</dbReference>
<dbReference type="PDB" id="5KZM">
    <property type="method" value="X-ray"/>
    <property type="resolution" value="2.80 A"/>
    <property type="chains" value="B=1-396"/>
</dbReference>
<dbReference type="PDBsum" id="5KZM"/>
<dbReference type="SMR" id="Q5NE79"/>
<dbReference type="IntAct" id="Q5NE79">
    <property type="interactions" value="4"/>
</dbReference>
<dbReference type="STRING" id="177416.FTT_1773c"/>
<dbReference type="DNASU" id="3190984"/>
<dbReference type="EnsemblBacteria" id="CAG46406">
    <property type="protein sequence ID" value="CAG46406"/>
    <property type="gene ID" value="FTT_1773c"/>
</dbReference>
<dbReference type="GeneID" id="39482396"/>
<dbReference type="KEGG" id="ftu:FTT_1773c"/>
<dbReference type="eggNOG" id="COG0133">
    <property type="taxonomic scope" value="Bacteria"/>
</dbReference>
<dbReference type="OrthoDB" id="9766131at2"/>
<dbReference type="UniPathway" id="UPA00035">
    <property type="reaction ID" value="UER00044"/>
</dbReference>
<dbReference type="Proteomes" id="UP000001174">
    <property type="component" value="Chromosome"/>
</dbReference>
<dbReference type="GO" id="GO:0005737">
    <property type="term" value="C:cytoplasm"/>
    <property type="evidence" value="ECO:0007669"/>
    <property type="project" value="TreeGrafter"/>
</dbReference>
<dbReference type="GO" id="GO:0004834">
    <property type="term" value="F:tryptophan synthase activity"/>
    <property type="evidence" value="ECO:0007669"/>
    <property type="project" value="UniProtKB-UniRule"/>
</dbReference>
<dbReference type="CDD" id="cd06446">
    <property type="entry name" value="Trp-synth_B"/>
    <property type="match status" value="1"/>
</dbReference>
<dbReference type="FunFam" id="3.40.50.1100:FF:000001">
    <property type="entry name" value="Tryptophan synthase beta chain"/>
    <property type="match status" value="1"/>
</dbReference>
<dbReference type="FunFam" id="3.40.50.1100:FF:000004">
    <property type="entry name" value="Tryptophan synthase beta chain"/>
    <property type="match status" value="1"/>
</dbReference>
<dbReference type="Gene3D" id="3.40.50.1100">
    <property type="match status" value="2"/>
</dbReference>
<dbReference type="HAMAP" id="MF_00133">
    <property type="entry name" value="Trp_synth_beta"/>
    <property type="match status" value="1"/>
</dbReference>
<dbReference type="InterPro" id="IPR006653">
    <property type="entry name" value="Trp_synth_b_CS"/>
</dbReference>
<dbReference type="InterPro" id="IPR006654">
    <property type="entry name" value="Trp_synth_beta"/>
</dbReference>
<dbReference type="InterPro" id="IPR023026">
    <property type="entry name" value="Trp_synth_beta/beta-like"/>
</dbReference>
<dbReference type="InterPro" id="IPR001926">
    <property type="entry name" value="TrpB-like_PALP"/>
</dbReference>
<dbReference type="InterPro" id="IPR036052">
    <property type="entry name" value="TrpB-like_PALP_sf"/>
</dbReference>
<dbReference type="NCBIfam" id="TIGR00263">
    <property type="entry name" value="trpB"/>
    <property type="match status" value="1"/>
</dbReference>
<dbReference type="PANTHER" id="PTHR48077:SF3">
    <property type="entry name" value="TRYPTOPHAN SYNTHASE"/>
    <property type="match status" value="1"/>
</dbReference>
<dbReference type="PANTHER" id="PTHR48077">
    <property type="entry name" value="TRYPTOPHAN SYNTHASE-RELATED"/>
    <property type="match status" value="1"/>
</dbReference>
<dbReference type="Pfam" id="PF00291">
    <property type="entry name" value="PALP"/>
    <property type="match status" value="1"/>
</dbReference>
<dbReference type="PIRSF" id="PIRSF001413">
    <property type="entry name" value="Trp_syn_beta"/>
    <property type="match status" value="1"/>
</dbReference>
<dbReference type="SUPFAM" id="SSF53686">
    <property type="entry name" value="Tryptophan synthase beta subunit-like PLP-dependent enzymes"/>
    <property type="match status" value="1"/>
</dbReference>
<dbReference type="PROSITE" id="PS00168">
    <property type="entry name" value="TRP_SYNTHASE_BETA"/>
    <property type="match status" value="1"/>
</dbReference>
<name>TRPB_FRATT</name>
<sequence>MSKLNAYFGEYGGQFVPQILVPALDQLEQEFIKAQADESFKQEFKELLQEYAGRPTALTKTRNIVKNTRTKLYLKREDLLHGGAHKTNQVLGQALLAKRMGKKEIIAETGAGQHGVATALACALLDLKCRVYMGAKDVERQSPNVFRMKLMGAEVIPVHSGSATLKDACNEALRDWSANYSKAHYLLGTAAGPHPFPTIVREFQRMIGEETKQQMLAKEGRLPDAVIACVGGGSNAIGMFADFIDEKNVKLIGVEPAGKGIETGEHGAPLKHGKTGIFFGMKAPLMQNSDGQIEESYSISAGLDFPSVGPQHAHLLAIGRAKYASATDDEALDAFKLLCKKEGIIPALESSHALAHALKLAYEDPNKEQLLVVNLSGRGDKDIFTVHDILKEKGEI</sequence>
<comment type="function">
    <text evidence="1">The beta subunit is responsible for the synthesis of L-tryptophan from indole and L-serine.</text>
</comment>
<comment type="catalytic activity">
    <reaction evidence="1">
        <text>(1S,2R)-1-C-(indol-3-yl)glycerol 3-phosphate + L-serine = D-glyceraldehyde 3-phosphate + L-tryptophan + H2O</text>
        <dbReference type="Rhea" id="RHEA:10532"/>
        <dbReference type="ChEBI" id="CHEBI:15377"/>
        <dbReference type="ChEBI" id="CHEBI:33384"/>
        <dbReference type="ChEBI" id="CHEBI:57912"/>
        <dbReference type="ChEBI" id="CHEBI:58866"/>
        <dbReference type="ChEBI" id="CHEBI:59776"/>
        <dbReference type="EC" id="4.2.1.20"/>
    </reaction>
</comment>
<comment type="cofactor">
    <cofactor evidence="1">
        <name>pyridoxal 5'-phosphate</name>
        <dbReference type="ChEBI" id="CHEBI:597326"/>
    </cofactor>
</comment>
<comment type="pathway">
    <text evidence="1">Amino-acid biosynthesis; L-tryptophan biosynthesis; L-tryptophan from chorismate: step 5/5.</text>
</comment>
<comment type="subunit">
    <text evidence="1">Tetramer of two alpha and two beta chains.</text>
</comment>
<comment type="similarity">
    <text evidence="1">Belongs to the TrpB family.</text>
</comment>
<keyword id="KW-0002">3D-structure</keyword>
<keyword id="KW-0028">Amino-acid biosynthesis</keyword>
<keyword id="KW-0057">Aromatic amino acid biosynthesis</keyword>
<keyword id="KW-0456">Lyase</keyword>
<keyword id="KW-0663">Pyridoxal phosphate</keyword>
<keyword id="KW-1185">Reference proteome</keyword>
<keyword id="KW-0822">Tryptophan biosynthesis</keyword>
<reference key="1">
    <citation type="journal article" date="2005" name="Nat. Genet.">
        <title>The complete genome sequence of Francisella tularensis, the causative agent of tularemia.</title>
        <authorList>
            <person name="Larsson P."/>
            <person name="Oyston P.C.F."/>
            <person name="Chain P."/>
            <person name="Chu M.C."/>
            <person name="Duffield M."/>
            <person name="Fuxelius H.-H."/>
            <person name="Garcia E."/>
            <person name="Haelltorp G."/>
            <person name="Johansson D."/>
            <person name="Isherwood K.E."/>
            <person name="Karp P.D."/>
            <person name="Larsson E."/>
            <person name="Liu Y."/>
            <person name="Michell S."/>
            <person name="Prior J."/>
            <person name="Prior R."/>
            <person name="Malfatti S."/>
            <person name="Sjoestedt A."/>
            <person name="Svensson K."/>
            <person name="Thompson N."/>
            <person name="Vergez L."/>
            <person name="Wagg J.K."/>
            <person name="Wren B.W."/>
            <person name="Lindler L.E."/>
            <person name="Andersson S.G.E."/>
            <person name="Forsman M."/>
            <person name="Titball R.W."/>
        </authorList>
    </citation>
    <scope>NUCLEOTIDE SEQUENCE [LARGE SCALE GENOMIC DNA]</scope>
    <source>
        <strain>SCHU S4 / Schu 4</strain>
    </source>
</reference>
<protein>
    <recommendedName>
        <fullName evidence="1">Tryptophan synthase beta chain</fullName>
        <ecNumber evidence="1">4.2.1.20</ecNumber>
    </recommendedName>
</protein>
<proteinExistence type="evidence at protein level"/>
<gene>
    <name evidence="1" type="primary">trpB</name>
    <name type="ordered locus">FTT_1773c</name>
</gene>